<comment type="function">
    <text evidence="3 4">Phosphatidylethanolamine-binding protein; part of the gene cluster that mediates the biosynthesis of the antihypercholesterolemic agents phomoidrides which are dimeric anhydrides (PubMed:26558485, PubMed:36374185). Within the pathway, tstNB is not essential for dimerization and its function has still to be determined (PubMed:36374185). The pathway begins with the highly reducing polyketide synthase tstA that catalyzes the formation of a C12-fatty acyl-ACP, starting from one acetate and 5 malonate units. The hydrolase tstM is involved in the release of the C12-fatty acyl chain from phiA. The alkylcitrate synthase (ACS) tstJ and the alkylcitrate dehydratase (ACDH) tstI then give rise to decarboxylated monomeric anhydrides by coupling the C12-fatty acyl chain with oxalacetic acid. The cyclase tstC is responsible for the dimerization of the monomeric anhydrides which leads to the production of prephomoidride that contains the characteristic bicyclo[4.3.1]deca-1,6-diene system of phomoidrides. Iterative oxidation catalyzed by the alpha-ketoglutarate-dependent dioxygenase tstK produced then phomoidride A. Finally, the methyltransferase tstE converts phomoidride A to phomoidride B via an acetalization reaction. The phosphatidylethanolamine-binding protein tstB and tstN are not essential for dimerization and their functions have still to be determined (PubMed:36374185).</text>
</comment>
<comment type="biotechnology">
    <text evidence="5">Phomoidrides A and B (also known as CP-225,917 and CP-263,114) are potent inhibitors of Ras farnesyltransferase and squalene synthase (PubMed:9066758). CP-225,917 and CP-263,114 inhibit Ras farnesyl transferase from rat brain with IC(50) values of 6 uM and 20 uoM, respectively (PubMed:9066758). CP-225,917 inhibits squalene synthase with an IC(50) value of 43 uM and CP-263,114 with an IC(50) of 160 uM (PubMed:9066758).</text>
</comment>
<comment type="similarity">
    <text evidence="7">Belongs to the tstN family.</text>
</comment>
<reference key="1">
    <citation type="journal article" date="2015" name="Genome Announc.">
        <title>Genome sequence of the AIDS-associated pathogen Penicillium marneffei (ATCC18224) and its near taxonomic relative Talaromyces stipitatus (ATCC10500).</title>
        <authorList>
            <person name="Nierman W.C."/>
            <person name="Fedorova-Abrams N.D."/>
            <person name="Andrianopoulos A."/>
        </authorList>
    </citation>
    <scope>NUCLEOTIDE SEQUENCE [LARGE SCALE GENOMIC DNA]</scope>
    <source>
        <strain>ATCC 10500 / CBS 375.48 / QM 6759 / NRRL 1006</strain>
    </source>
</reference>
<reference key="2">
    <citation type="journal article" date="1997" name="J. Antibiot.">
        <title>CP-225,917 and CP-263,114, novel Ras farnesylation inhibitors from an unidentified fungus. I. Taxonomy, fermentation, isolation, and biochemical properties.</title>
        <authorList>
            <person name="Dabrah T.T."/>
            <person name="Harwood H.J. Jr."/>
            <person name="Huang L.H."/>
            <person name="Jankovich N.D."/>
            <person name="Kaneko T."/>
            <person name="Li J.C."/>
            <person name="Lindsey S."/>
            <person name="Moshier P.M."/>
            <person name="Subashi T.A."/>
            <person name="Therrien M."/>
            <person name="Watts P.C."/>
        </authorList>
    </citation>
    <scope>BIOTECHNOLOGY</scope>
</reference>
<reference key="3">
    <citation type="journal article" date="2015" name="Org. Lett.">
        <title>Biosynthetic study on antihypercholesterolemic agent phomoidride: general biogenesis of fungal dimeric anhydrides.</title>
        <authorList>
            <person name="Fujii R."/>
            <person name="Matsu Y."/>
            <person name="Minami A."/>
            <person name="Nagamine S."/>
            <person name="Takeuchi I."/>
            <person name="Gomi K."/>
            <person name="Oikawa H."/>
        </authorList>
    </citation>
    <scope>IDENTIFICATION</scope>
    <scope>FUNCTION</scope>
</reference>
<reference key="4">
    <citation type="journal article" date="2022" name="J. Am. Chem. Soc.">
        <title>Elucidation of late-stage biosynthesis of phomoidride: proposal of cyclization mechanism affording characteristic nine-membered ring of fungal dimeric anhydride.</title>
        <authorList>
            <person name="Yamamoto S."/>
            <person name="Matsuyama T."/>
            <person name="Ozaki T."/>
            <person name="Takino J."/>
            <person name="Sato H."/>
            <person name="Uchiyama M."/>
            <person name="Minami A."/>
            <person name="Oikawa H."/>
        </authorList>
    </citation>
    <scope>FUNCTION</scope>
</reference>
<protein>
    <recommendedName>
        <fullName evidence="6">Phomoidride biosynthesis cluster protein N</fullName>
    </recommendedName>
</protein>
<name>TSTN_TALSN</name>
<gene>
    <name evidence="6" type="primary">tstN</name>
    <name type="ORF">TSTA_048510</name>
</gene>
<sequence length="198" mass="22097">MILFSIFVALLAATRAQSQTPPGFKPSTELHLGVTFQDGVSVQAGHELLANEAKSAPQLDLHSLLAIHHTQTPFYHSTWKFMVFMIDIDVERNGTKYPLLHWYQPDLILSGRTGRLSIESDSNMPKAMYAGPAPPPGPAHRYVEVIFKQPERYELPADFEKFLENTIAARLGFDIEQFVKEAGLSEPVAGNWFLTATS</sequence>
<dbReference type="EMBL" id="EQ962657">
    <property type="protein sequence ID" value="EED15411.1"/>
    <property type="molecule type" value="Genomic_DNA"/>
</dbReference>
<dbReference type="RefSeq" id="XP_002485364.1">
    <property type="nucleotide sequence ID" value="XM_002485319.1"/>
</dbReference>
<dbReference type="SMR" id="B8MKZ5"/>
<dbReference type="STRING" id="441959.B8MKZ5"/>
<dbReference type="GeneID" id="8107033"/>
<dbReference type="VEuPathDB" id="FungiDB:TSTA_048510"/>
<dbReference type="eggNOG" id="ENOG502SG3W">
    <property type="taxonomic scope" value="Eukaryota"/>
</dbReference>
<dbReference type="HOGENOM" id="CLU_043994_4_5_1"/>
<dbReference type="InParanoid" id="B8MKZ5"/>
<dbReference type="OMA" id="ANWFQVV"/>
<dbReference type="OrthoDB" id="440553at2759"/>
<dbReference type="PhylomeDB" id="B8MKZ5"/>
<dbReference type="Proteomes" id="UP000001745">
    <property type="component" value="Unassembled WGS sequence"/>
</dbReference>
<dbReference type="GO" id="GO:0030414">
    <property type="term" value="F:peptidase inhibitor activity"/>
    <property type="evidence" value="ECO:0007669"/>
    <property type="project" value="TreeGrafter"/>
</dbReference>
<dbReference type="GO" id="GO:0005543">
    <property type="term" value="F:phospholipid binding"/>
    <property type="evidence" value="ECO:0007669"/>
    <property type="project" value="TreeGrafter"/>
</dbReference>
<dbReference type="GO" id="GO:0030162">
    <property type="term" value="P:regulation of proteolysis"/>
    <property type="evidence" value="ECO:0007669"/>
    <property type="project" value="TreeGrafter"/>
</dbReference>
<dbReference type="GO" id="GO:0046578">
    <property type="term" value="P:regulation of Ras protein signal transduction"/>
    <property type="evidence" value="ECO:0007669"/>
    <property type="project" value="TreeGrafter"/>
</dbReference>
<dbReference type="CDD" id="cd00866">
    <property type="entry name" value="PEBP_euk"/>
    <property type="match status" value="1"/>
</dbReference>
<dbReference type="Gene3D" id="3.90.280.10">
    <property type="entry name" value="PEBP-like"/>
    <property type="match status" value="1"/>
</dbReference>
<dbReference type="InterPro" id="IPR008914">
    <property type="entry name" value="PEBP"/>
</dbReference>
<dbReference type="InterPro" id="IPR036610">
    <property type="entry name" value="PEBP-like_sf"/>
</dbReference>
<dbReference type="InterPro" id="IPR035810">
    <property type="entry name" value="PEBP_euk"/>
</dbReference>
<dbReference type="PANTHER" id="PTHR11362:SF148">
    <property type="entry name" value="CARBOXYPEPTIDASE Y INHIBITOR"/>
    <property type="match status" value="1"/>
</dbReference>
<dbReference type="PANTHER" id="PTHR11362">
    <property type="entry name" value="PHOSPHATIDYLETHANOLAMINE-BINDING PROTEIN"/>
    <property type="match status" value="1"/>
</dbReference>
<dbReference type="Pfam" id="PF01161">
    <property type="entry name" value="PBP"/>
    <property type="match status" value="1"/>
</dbReference>
<dbReference type="SUPFAM" id="SSF49777">
    <property type="entry name" value="PEBP-like"/>
    <property type="match status" value="1"/>
</dbReference>
<keyword id="KW-0325">Glycoprotein</keyword>
<keyword id="KW-1185">Reference proteome</keyword>
<keyword id="KW-0732">Signal</keyword>
<accession>B8MKZ5</accession>
<evidence type="ECO:0000255" key="1"/>
<evidence type="ECO:0000255" key="2">
    <source>
        <dbReference type="PROSITE-ProRule" id="PRU00498"/>
    </source>
</evidence>
<evidence type="ECO:0000269" key="3">
    <source>
    </source>
</evidence>
<evidence type="ECO:0000269" key="4">
    <source>
    </source>
</evidence>
<evidence type="ECO:0000269" key="5">
    <source>
    </source>
</evidence>
<evidence type="ECO:0000303" key="6">
    <source>
    </source>
</evidence>
<evidence type="ECO:0000305" key="7"/>
<feature type="signal peptide" evidence="1">
    <location>
        <begin position="1"/>
        <end position="18"/>
    </location>
</feature>
<feature type="chain" id="PRO_5002877665" description="Phomoidride biosynthesis cluster protein N" evidence="1">
    <location>
        <begin position="19"/>
        <end position="198"/>
    </location>
</feature>
<feature type="glycosylation site" description="N-linked (GlcNAc...) asparagine" evidence="2">
    <location>
        <position position="93"/>
    </location>
</feature>
<proteinExistence type="evidence at protein level"/>
<organism>
    <name type="scientific">Talaromyces stipitatus (strain ATCC 10500 / CBS 375.48 / QM 6759 / NRRL 1006)</name>
    <name type="common">Penicillium stipitatum</name>
    <dbReference type="NCBI Taxonomy" id="441959"/>
    <lineage>
        <taxon>Eukaryota</taxon>
        <taxon>Fungi</taxon>
        <taxon>Dikarya</taxon>
        <taxon>Ascomycota</taxon>
        <taxon>Pezizomycotina</taxon>
        <taxon>Eurotiomycetes</taxon>
        <taxon>Eurotiomycetidae</taxon>
        <taxon>Eurotiales</taxon>
        <taxon>Trichocomaceae</taxon>
        <taxon>Talaromyces</taxon>
        <taxon>Talaromyces sect. Talaromyces</taxon>
    </lineage>
</organism>